<keyword id="KW-1185">Reference proteome</keyword>
<keyword id="KW-0687">Ribonucleoprotein</keyword>
<keyword id="KW-0689">Ribosomal protein</keyword>
<reference key="1">
    <citation type="journal article" date="2006" name="Appl. Environ. Microbiol.">
        <title>Complete genome sequence of the marine, chemolithoautotrophic, ammonia-oxidizing bacterium Nitrosococcus oceani ATCC 19707.</title>
        <authorList>
            <person name="Klotz M.G."/>
            <person name="Arp D.J."/>
            <person name="Chain P.S.G."/>
            <person name="El-Sheikh A.F."/>
            <person name="Hauser L.J."/>
            <person name="Hommes N.G."/>
            <person name="Larimer F.W."/>
            <person name="Malfatti S.A."/>
            <person name="Norton J.M."/>
            <person name="Poret-Peterson A.T."/>
            <person name="Vergez L.M."/>
            <person name="Ward B.B."/>
        </authorList>
    </citation>
    <scope>NUCLEOTIDE SEQUENCE [LARGE SCALE GENOMIC DNA]</scope>
    <source>
        <strain>ATCC 19707 / BCRC 17464 / JCM 30415 / NCIMB 11848 / C-107</strain>
    </source>
</reference>
<organism>
    <name type="scientific">Nitrosococcus oceani (strain ATCC 19707 / BCRC 17464 / JCM 30415 / NCIMB 11848 / C-107)</name>
    <dbReference type="NCBI Taxonomy" id="323261"/>
    <lineage>
        <taxon>Bacteria</taxon>
        <taxon>Pseudomonadati</taxon>
        <taxon>Pseudomonadota</taxon>
        <taxon>Gammaproteobacteria</taxon>
        <taxon>Chromatiales</taxon>
        <taxon>Chromatiaceae</taxon>
        <taxon>Nitrosococcus</taxon>
    </lineage>
</organism>
<proteinExistence type="inferred from homology"/>
<protein>
    <recommendedName>
        <fullName evidence="1">Large ribosomal subunit protein bL33</fullName>
    </recommendedName>
    <alternativeName>
        <fullName evidence="2">50S ribosomal protein L33</fullName>
    </alternativeName>
</protein>
<accession>Q3J7V2</accession>
<feature type="chain" id="PRO_0000356588" description="Large ribosomal subunit protein bL33">
    <location>
        <begin position="1"/>
        <end position="51"/>
    </location>
</feature>
<name>RL33_NITOC</name>
<comment type="similarity">
    <text evidence="1">Belongs to the bacterial ribosomal protein bL33 family.</text>
</comment>
<evidence type="ECO:0000255" key="1">
    <source>
        <dbReference type="HAMAP-Rule" id="MF_00294"/>
    </source>
</evidence>
<evidence type="ECO:0000305" key="2"/>
<gene>
    <name evidence="1" type="primary">rpmG</name>
    <name type="ordered locus">Noc_2641</name>
</gene>
<sequence length="51" mass="6008">MRDKIKLVSSAGTGHYYTTTKNKRTTPEKLEKKKYDPVVRKHVLYKEAKIK</sequence>
<dbReference type="EMBL" id="CP000127">
    <property type="protein sequence ID" value="ABA59094.1"/>
    <property type="molecule type" value="Genomic_DNA"/>
</dbReference>
<dbReference type="RefSeq" id="WP_002812427.1">
    <property type="nucleotide sequence ID" value="NC_007484.1"/>
</dbReference>
<dbReference type="SMR" id="Q3J7V2"/>
<dbReference type="FunCoup" id="Q3J7V2">
    <property type="interactions" value="517"/>
</dbReference>
<dbReference type="STRING" id="323261.Noc_2641"/>
<dbReference type="KEGG" id="noc:Noc_2641"/>
<dbReference type="eggNOG" id="COG0267">
    <property type="taxonomic scope" value="Bacteria"/>
</dbReference>
<dbReference type="HOGENOM" id="CLU_190949_1_1_6"/>
<dbReference type="InParanoid" id="Q3J7V2"/>
<dbReference type="Proteomes" id="UP000006838">
    <property type="component" value="Chromosome"/>
</dbReference>
<dbReference type="GO" id="GO:0022625">
    <property type="term" value="C:cytosolic large ribosomal subunit"/>
    <property type="evidence" value="ECO:0007669"/>
    <property type="project" value="TreeGrafter"/>
</dbReference>
<dbReference type="GO" id="GO:0003735">
    <property type="term" value="F:structural constituent of ribosome"/>
    <property type="evidence" value="ECO:0007669"/>
    <property type="project" value="InterPro"/>
</dbReference>
<dbReference type="GO" id="GO:0006412">
    <property type="term" value="P:translation"/>
    <property type="evidence" value="ECO:0007669"/>
    <property type="project" value="UniProtKB-UniRule"/>
</dbReference>
<dbReference type="FunFam" id="2.20.28.120:FF:000001">
    <property type="entry name" value="50S ribosomal protein L33"/>
    <property type="match status" value="1"/>
</dbReference>
<dbReference type="Gene3D" id="2.20.28.120">
    <property type="entry name" value="Ribosomal protein L33"/>
    <property type="match status" value="1"/>
</dbReference>
<dbReference type="HAMAP" id="MF_00294">
    <property type="entry name" value="Ribosomal_bL33"/>
    <property type="match status" value="1"/>
</dbReference>
<dbReference type="InterPro" id="IPR001705">
    <property type="entry name" value="Ribosomal_bL33"/>
</dbReference>
<dbReference type="InterPro" id="IPR018264">
    <property type="entry name" value="Ribosomal_bL33_CS"/>
</dbReference>
<dbReference type="InterPro" id="IPR038584">
    <property type="entry name" value="Ribosomal_bL33_sf"/>
</dbReference>
<dbReference type="InterPro" id="IPR011332">
    <property type="entry name" value="Ribosomal_zn-bd"/>
</dbReference>
<dbReference type="NCBIfam" id="NF001860">
    <property type="entry name" value="PRK00595.1"/>
    <property type="match status" value="1"/>
</dbReference>
<dbReference type="NCBIfam" id="TIGR01023">
    <property type="entry name" value="rpmG_bact"/>
    <property type="match status" value="1"/>
</dbReference>
<dbReference type="PANTHER" id="PTHR15238">
    <property type="entry name" value="54S RIBOSOMAL PROTEIN L39, MITOCHONDRIAL"/>
    <property type="match status" value="1"/>
</dbReference>
<dbReference type="PANTHER" id="PTHR15238:SF1">
    <property type="entry name" value="LARGE RIBOSOMAL SUBUNIT PROTEIN BL33M"/>
    <property type="match status" value="1"/>
</dbReference>
<dbReference type="Pfam" id="PF00471">
    <property type="entry name" value="Ribosomal_L33"/>
    <property type="match status" value="1"/>
</dbReference>
<dbReference type="SUPFAM" id="SSF57829">
    <property type="entry name" value="Zn-binding ribosomal proteins"/>
    <property type="match status" value="1"/>
</dbReference>
<dbReference type="PROSITE" id="PS00582">
    <property type="entry name" value="RIBOSOMAL_L33"/>
    <property type="match status" value="1"/>
</dbReference>